<sequence>MTDTQVFVALLLALVPAVLAYRLGTELYR</sequence>
<accession>Q5MZZ8</accession>
<protein>
    <recommendedName>
        <fullName evidence="1">Photosystem I reaction center subunit XII</fullName>
    </recommendedName>
    <alternativeName>
        <fullName evidence="1">PSI-M</fullName>
    </alternativeName>
</protein>
<comment type="subcellular location">
    <subcellularLocation>
        <location evidence="1">Cellular thylakoid membrane</location>
        <topology evidence="1">Single-pass membrane protein</topology>
    </subcellularLocation>
</comment>
<comment type="similarity">
    <text evidence="1">Belongs to the PsaM family.</text>
</comment>
<feature type="chain" id="PRO_0000277392" description="Photosystem I reaction center subunit XII">
    <location>
        <begin position="1"/>
        <end position="29"/>
    </location>
</feature>
<feature type="transmembrane region" description="Helical" evidence="1">
    <location>
        <begin position="7"/>
        <end position="24"/>
    </location>
</feature>
<organism>
    <name type="scientific">Synechococcus sp. (strain ATCC 27144 / PCC 6301 / SAUG 1402/1)</name>
    <name type="common">Anacystis nidulans</name>
    <dbReference type="NCBI Taxonomy" id="269084"/>
    <lineage>
        <taxon>Bacteria</taxon>
        <taxon>Bacillati</taxon>
        <taxon>Cyanobacteriota</taxon>
        <taxon>Cyanophyceae</taxon>
        <taxon>Synechococcales</taxon>
        <taxon>Synechococcaceae</taxon>
        <taxon>Synechococcus</taxon>
    </lineage>
</organism>
<keyword id="KW-0472">Membrane</keyword>
<keyword id="KW-0602">Photosynthesis</keyword>
<keyword id="KW-0603">Photosystem I</keyword>
<keyword id="KW-0793">Thylakoid</keyword>
<keyword id="KW-0812">Transmembrane</keyword>
<keyword id="KW-1133">Transmembrane helix</keyword>
<evidence type="ECO:0000255" key="1">
    <source>
        <dbReference type="HAMAP-Rule" id="MF_00828"/>
    </source>
</evidence>
<reference key="1">
    <citation type="journal article" date="2007" name="Photosyn. Res.">
        <title>Complete nucleotide sequence of the freshwater unicellular cyanobacterium Synechococcus elongatus PCC 6301 chromosome: gene content and organization.</title>
        <authorList>
            <person name="Sugita C."/>
            <person name="Ogata K."/>
            <person name="Shikata M."/>
            <person name="Jikuya H."/>
            <person name="Takano J."/>
            <person name="Furumichi M."/>
            <person name="Kanehisa M."/>
            <person name="Omata T."/>
            <person name="Sugiura M."/>
            <person name="Sugita M."/>
        </authorList>
    </citation>
    <scope>NUCLEOTIDE SEQUENCE [LARGE SCALE GENOMIC DNA]</scope>
    <source>
        <strain>ATCC 27144 / PCC 6301 / SAUG 1402/1</strain>
    </source>
</reference>
<name>PSAM_SYNP6</name>
<dbReference type="EMBL" id="AP008231">
    <property type="protein sequence ID" value="BAD80372.1"/>
    <property type="molecule type" value="Genomic_DNA"/>
</dbReference>
<dbReference type="RefSeq" id="WP_011244492.1">
    <property type="nucleotide sequence ID" value="NZ_CP085785.1"/>
</dbReference>
<dbReference type="SMR" id="Q5MZZ8"/>
<dbReference type="GeneID" id="72430785"/>
<dbReference type="KEGG" id="syc:syc2182_c"/>
<dbReference type="Proteomes" id="UP000001175">
    <property type="component" value="Chromosome"/>
</dbReference>
<dbReference type="GO" id="GO:0009522">
    <property type="term" value="C:photosystem I"/>
    <property type="evidence" value="ECO:0007669"/>
    <property type="project" value="UniProtKB-KW"/>
</dbReference>
<dbReference type="GO" id="GO:0031676">
    <property type="term" value="C:plasma membrane-derived thylakoid membrane"/>
    <property type="evidence" value="ECO:0007669"/>
    <property type="project" value="UniProtKB-SubCell"/>
</dbReference>
<dbReference type="GO" id="GO:0015979">
    <property type="term" value="P:photosynthesis"/>
    <property type="evidence" value="ECO:0007669"/>
    <property type="project" value="UniProtKB-UniRule"/>
</dbReference>
<dbReference type="HAMAP" id="MF_00828">
    <property type="entry name" value="PSI_PsaM"/>
    <property type="match status" value="1"/>
</dbReference>
<dbReference type="InterPro" id="IPR010010">
    <property type="entry name" value="PSI_PsaM"/>
</dbReference>
<dbReference type="InterPro" id="IPR037279">
    <property type="entry name" value="PSI_PsaM_sf"/>
</dbReference>
<dbReference type="NCBIfam" id="TIGR03053">
    <property type="entry name" value="PS_I_psaM"/>
    <property type="match status" value="1"/>
</dbReference>
<dbReference type="Pfam" id="PF07465">
    <property type="entry name" value="PsaM"/>
    <property type="match status" value="1"/>
</dbReference>
<dbReference type="SUPFAM" id="SSF81548">
    <property type="entry name" value="Subunit XII of photosystem I reaction centre, PsaM"/>
    <property type="match status" value="1"/>
</dbReference>
<gene>
    <name evidence="1" type="primary">psaM</name>
    <name type="ordered locus">syc2182_c</name>
</gene>
<proteinExistence type="inferred from homology"/>